<name>KLHL8_CAEEL</name>
<feature type="chain" id="PRO_0000424030" description="Kelch-like protein 8">
    <location>
        <begin position="1"/>
        <end position="690"/>
    </location>
</feature>
<feature type="domain" description="BTB" evidence="1">
    <location>
        <begin position="111"/>
        <end position="178"/>
    </location>
</feature>
<feature type="domain" description="BACK">
    <location>
        <begin position="213"/>
        <end position="314"/>
    </location>
</feature>
<feature type="repeat" description="Kelch 1">
    <location>
        <begin position="383"/>
        <end position="430"/>
    </location>
</feature>
<feature type="repeat" description="Kelch 2">
    <location>
        <begin position="431"/>
        <end position="477"/>
    </location>
</feature>
<feature type="repeat" description="Kelch 3">
    <location>
        <begin position="478"/>
        <end position="524"/>
    </location>
</feature>
<feature type="repeat" description="Kelch 4">
    <location>
        <begin position="525"/>
        <end position="571"/>
    </location>
</feature>
<feature type="repeat" description="Kelch 5">
    <location>
        <begin position="572"/>
        <end position="618"/>
    </location>
</feature>
<feature type="repeat" description="Kelch 6">
    <location>
        <begin position="620"/>
        <end position="665"/>
    </location>
</feature>
<reference key="1">
    <citation type="journal article" date="2006" name="Mol. Biol. Cell">
        <title>KEL-8 is a substrate receptor for CUL3-dependent ubiquitin ligase that regulates synaptic glutamate receptor turnover.</title>
        <authorList>
            <person name="Schaefer H."/>
            <person name="Rongo C."/>
        </authorList>
    </citation>
    <scope>NUCLEOTIDE SEQUENCE [MRNA]</scope>
    <scope>FUNCTION</scope>
    <scope>SUBCELLULAR LOCATION</scope>
    <scope>TISSUE SPECIFICITY</scope>
    <scope>IDENTIFICATION IN A BCR (BTB-CUL3-RBX1) E3 UBIQUITIN LIGASE COMPLEX</scope>
    <source>
        <strain>Bristol N2</strain>
    </source>
</reference>
<reference key="2">
    <citation type="journal article" date="1998" name="Science">
        <title>Genome sequence of the nematode C. elegans: a platform for investigating biology.</title>
        <authorList>
            <consortium name="The C. elegans sequencing consortium"/>
        </authorList>
    </citation>
    <scope>NUCLEOTIDE SEQUENCE [LARGE SCALE GENOMIC DNA]</scope>
    <source>
        <strain>Bristol N2</strain>
    </source>
</reference>
<reference key="3">
    <citation type="journal article" date="2009" name="J. Biol. Chem.">
        <title>Control of rapsyn stability by the CUL-3-containing E3 ligase complex.</title>
        <authorList>
            <person name="Nam S."/>
            <person name="Min K."/>
            <person name="Hwang H."/>
            <person name="Lee H.O."/>
            <person name="Lee J.H."/>
            <person name="Yoon J."/>
            <person name="Lee H."/>
            <person name="Park S."/>
            <person name="Lee J."/>
        </authorList>
    </citation>
    <scope>FUNCTION</scope>
    <scope>INTERACTION WITH RPY-1</scope>
</reference>
<keyword id="KW-0880">Kelch repeat</keyword>
<keyword id="KW-1185">Reference proteome</keyword>
<keyword id="KW-0677">Repeat</keyword>
<keyword id="KW-0770">Synapse</keyword>
<keyword id="KW-0833">Ubl conjugation pathway</keyword>
<proteinExistence type="evidence at protein level"/>
<accession>G5ED84</accession>
<gene>
    <name type="primary">kel-8</name>
    <name type="ORF">W02G9.2</name>
</gene>
<sequence length="690" mass="76763">MPVYAKAIFGSFPSVQQVRVENGERCLIEAMDELNKNEKGLYRPVRLENGDQISTTDDVLNGKLARVSYTPFEEFELVSNSKGSCMEYENQEQSSKIMEQMRILRQTEELCDVELLVAGSVIRAHRYILAAASPYFKAMFTNGMVEMKKLTIELQDIPEESVRIIVDYIYTDKIAITMNNVHQLIFTATVLQMDVIVVACQQFLATMITSHNCMSLYHFSDIYNCTNLISSIEDFASSQFRCIRKSPEFNSISFHHLKSLLNRSDLNVSEEQDVFETIVQWVSSNPRDRQHHFVQLFKTLRLHLVGWNFLCEAVNSNSYVKNSQECREIISAMVLDAMTPSKRKHPESNHENTSEYSASMACPSLTASSSSSTSTFRKSVAGAIFCAGGRGKAGGPFSSVEAYDWRRNQWIEVPDMMSQRRHVGVVSANGNLYAIGGHDGTAHLATAEAFQPSIRQWKRIASMKTARRGIAVASIENVIYAVGGLDDTTCYKTVERYDIEEDEWSTVADMDVQRGGVGVAVIGRYLFAIGGNDGTSSLETCERFDPMIDKWKRIASMKNRRAGSGVCVLDGYLYAIGGFDDNAPLETCERYDPDADKWITLDKMSSPRGGVGVAALGGKVYAIGGHDGSDYLNTVECYDPIANRWQPAAEIKECRAGAGVAWANVRMHQLSRTPEKCDSGCAPSGGSYCI</sequence>
<dbReference type="EMBL" id="DQ338465">
    <property type="protein sequence ID" value="ABC67522.1"/>
    <property type="molecule type" value="mRNA"/>
</dbReference>
<dbReference type="EMBL" id="FO081762">
    <property type="protein sequence ID" value="CCD74270.1"/>
    <property type="molecule type" value="Genomic_DNA"/>
</dbReference>
<dbReference type="PIR" id="T33222">
    <property type="entry name" value="T33222"/>
</dbReference>
<dbReference type="RefSeq" id="NP_503729.4">
    <property type="nucleotide sequence ID" value="NM_071328.5"/>
</dbReference>
<dbReference type="SMR" id="G5ED84"/>
<dbReference type="BioGRID" id="532329">
    <property type="interactions" value="14"/>
</dbReference>
<dbReference type="FunCoup" id="G5ED84">
    <property type="interactions" value="2"/>
</dbReference>
<dbReference type="IntAct" id="G5ED84">
    <property type="interactions" value="44"/>
</dbReference>
<dbReference type="STRING" id="6239.W02G9.2b.1"/>
<dbReference type="PaxDb" id="6239-W02G9.2"/>
<dbReference type="EnsemblMetazoa" id="W02G9.2a.1">
    <property type="protein sequence ID" value="W02G9.2a.1"/>
    <property type="gene ID" value="WBGene00020952"/>
</dbReference>
<dbReference type="EnsemblMetazoa" id="W02G9.2a.2">
    <property type="protein sequence ID" value="W02G9.2a.2"/>
    <property type="gene ID" value="WBGene00020952"/>
</dbReference>
<dbReference type="EnsemblMetazoa" id="W02G9.2a.3">
    <property type="protein sequence ID" value="W02G9.2a.3"/>
    <property type="gene ID" value="WBGene00020952"/>
</dbReference>
<dbReference type="GeneID" id="3565011"/>
<dbReference type="KEGG" id="cel:CELE_W02G9.2"/>
<dbReference type="AGR" id="WB:WBGene00020952"/>
<dbReference type="CTD" id="3565011"/>
<dbReference type="WormBase" id="W02G9.2a">
    <property type="protein sequence ID" value="CE39523"/>
    <property type="gene ID" value="WBGene00020952"/>
    <property type="gene designation" value="kel-8"/>
</dbReference>
<dbReference type="eggNOG" id="KOG4441">
    <property type="taxonomic scope" value="Eukaryota"/>
</dbReference>
<dbReference type="GeneTree" id="ENSGT00940000157583"/>
<dbReference type="HOGENOM" id="CLU_004253_14_2_1"/>
<dbReference type="InParanoid" id="G5ED84"/>
<dbReference type="OrthoDB" id="45365at2759"/>
<dbReference type="PhylomeDB" id="G5ED84"/>
<dbReference type="SignaLink" id="G5ED84"/>
<dbReference type="UniPathway" id="UPA00143"/>
<dbReference type="PRO" id="PR:G5ED84"/>
<dbReference type="Proteomes" id="UP000001940">
    <property type="component" value="Chromosome V"/>
</dbReference>
<dbReference type="Bgee" id="WBGene00020952">
    <property type="expression patterns" value="Expressed in germ line (C elegans) and 4 other cell types or tissues"/>
</dbReference>
<dbReference type="ExpressionAtlas" id="G5ED84">
    <property type="expression patterns" value="baseline and differential"/>
</dbReference>
<dbReference type="GO" id="GO:0031463">
    <property type="term" value="C:Cul3-RING ubiquitin ligase complex"/>
    <property type="evidence" value="ECO:0000314"/>
    <property type="project" value="UniProtKB"/>
</dbReference>
<dbReference type="GO" id="GO:0005737">
    <property type="term" value="C:cytoplasm"/>
    <property type="evidence" value="ECO:0000318"/>
    <property type="project" value="GO_Central"/>
</dbReference>
<dbReference type="GO" id="GO:0043005">
    <property type="term" value="C:neuron projection"/>
    <property type="evidence" value="ECO:0000314"/>
    <property type="project" value="WormBase"/>
</dbReference>
<dbReference type="GO" id="GO:0043025">
    <property type="term" value="C:neuronal cell body"/>
    <property type="evidence" value="ECO:0000314"/>
    <property type="project" value="WormBase"/>
</dbReference>
<dbReference type="GO" id="GO:0014069">
    <property type="term" value="C:postsynaptic density"/>
    <property type="evidence" value="ECO:0000314"/>
    <property type="project" value="WormBase"/>
</dbReference>
<dbReference type="GO" id="GO:1990756">
    <property type="term" value="F:ubiquitin-like ligase-substrate adaptor activity"/>
    <property type="evidence" value="ECO:0000318"/>
    <property type="project" value="GO_Central"/>
</dbReference>
<dbReference type="GO" id="GO:0043161">
    <property type="term" value="P:proteasome-mediated ubiquitin-dependent protein catabolic process"/>
    <property type="evidence" value="ECO:0000318"/>
    <property type="project" value="GO_Central"/>
</dbReference>
<dbReference type="GO" id="GO:0016567">
    <property type="term" value="P:protein ubiquitination"/>
    <property type="evidence" value="ECO:0000314"/>
    <property type="project" value="UniProtKB"/>
</dbReference>
<dbReference type="GO" id="GO:0006511">
    <property type="term" value="P:ubiquitin-dependent protein catabolic process"/>
    <property type="evidence" value="ECO:0000314"/>
    <property type="project" value="UniProtKB"/>
</dbReference>
<dbReference type="FunFam" id="1.25.40.420:FF:000001">
    <property type="entry name" value="Kelch-like family member 12"/>
    <property type="match status" value="1"/>
</dbReference>
<dbReference type="Gene3D" id="1.25.40.420">
    <property type="match status" value="1"/>
</dbReference>
<dbReference type="Gene3D" id="2.120.10.80">
    <property type="entry name" value="Kelch-type beta propeller"/>
    <property type="match status" value="2"/>
</dbReference>
<dbReference type="Gene3D" id="3.30.710.10">
    <property type="entry name" value="Potassium Channel Kv1.1, Chain A"/>
    <property type="match status" value="1"/>
</dbReference>
<dbReference type="InterPro" id="IPR011705">
    <property type="entry name" value="BACK"/>
</dbReference>
<dbReference type="InterPro" id="IPR017096">
    <property type="entry name" value="BTB-kelch_protein"/>
</dbReference>
<dbReference type="InterPro" id="IPR000210">
    <property type="entry name" value="BTB/POZ_dom"/>
</dbReference>
<dbReference type="InterPro" id="IPR015915">
    <property type="entry name" value="Kelch-typ_b-propeller"/>
</dbReference>
<dbReference type="InterPro" id="IPR006652">
    <property type="entry name" value="Kelch_1"/>
</dbReference>
<dbReference type="InterPro" id="IPR011333">
    <property type="entry name" value="SKP1/BTB/POZ_sf"/>
</dbReference>
<dbReference type="PANTHER" id="PTHR24412">
    <property type="entry name" value="KELCH PROTEIN"/>
    <property type="match status" value="1"/>
</dbReference>
<dbReference type="PANTHER" id="PTHR24412:SF480">
    <property type="entry name" value="KELCH-LIKE PROTEIN 8"/>
    <property type="match status" value="1"/>
</dbReference>
<dbReference type="Pfam" id="PF07707">
    <property type="entry name" value="BACK"/>
    <property type="match status" value="1"/>
</dbReference>
<dbReference type="Pfam" id="PF00651">
    <property type="entry name" value="BTB"/>
    <property type="match status" value="1"/>
</dbReference>
<dbReference type="Pfam" id="PF01344">
    <property type="entry name" value="Kelch_1"/>
    <property type="match status" value="6"/>
</dbReference>
<dbReference type="PIRSF" id="PIRSF037037">
    <property type="entry name" value="Kelch-like_protein_gigaxonin"/>
    <property type="match status" value="1"/>
</dbReference>
<dbReference type="PRINTS" id="PR00501">
    <property type="entry name" value="KELCHREPEAT"/>
</dbReference>
<dbReference type="SMART" id="SM00875">
    <property type="entry name" value="BACK"/>
    <property type="match status" value="1"/>
</dbReference>
<dbReference type="SMART" id="SM00225">
    <property type="entry name" value="BTB"/>
    <property type="match status" value="1"/>
</dbReference>
<dbReference type="SMART" id="SM00612">
    <property type="entry name" value="Kelch"/>
    <property type="match status" value="6"/>
</dbReference>
<dbReference type="SUPFAM" id="SSF117281">
    <property type="entry name" value="Kelch motif"/>
    <property type="match status" value="2"/>
</dbReference>
<dbReference type="SUPFAM" id="SSF54695">
    <property type="entry name" value="POZ domain"/>
    <property type="match status" value="1"/>
</dbReference>
<dbReference type="PROSITE" id="PS50097">
    <property type="entry name" value="BTB"/>
    <property type="match status" value="1"/>
</dbReference>
<organism>
    <name type="scientific">Caenorhabditis elegans</name>
    <dbReference type="NCBI Taxonomy" id="6239"/>
    <lineage>
        <taxon>Eukaryota</taxon>
        <taxon>Metazoa</taxon>
        <taxon>Ecdysozoa</taxon>
        <taxon>Nematoda</taxon>
        <taxon>Chromadorea</taxon>
        <taxon>Rhabditida</taxon>
        <taxon>Rhabditina</taxon>
        <taxon>Rhabditomorpha</taxon>
        <taxon>Rhabditoidea</taxon>
        <taxon>Rhabditidae</taxon>
        <taxon>Peloderinae</taxon>
        <taxon>Caenorhabditis</taxon>
    </lineage>
</organism>
<protein>
    <recommendedName>
        <fullName>Kelch-like protein 8</fullName>
    </recommendedName>
</protein>
<comment type="function">
    <text evidence="2 3">Substrate-specific adapter of a BCR (BTB-CUL3-RBX1) E3 ubiquitin ligase complex that regulates degradation of glutamate receptors in neurons. The BCR(kel-8) ubiquitin ligase complex mediates ubiquitination and subsequent degradation of rpy-1. Indirectly regulates the protein turnover of glr-1, possibly via ubiquitination and degradation of rpy-1.</text>
</comment>
<comment type="pathway">
    <text>Protein modification; protein ubiquitination.</text>
</comment>
<comment type="subunit">
    <text evidence="2 3">Component of the BCR(kel-8) E3 ubiquitin ligase complex, at least composed of cul-3, kel-8 and rbx-1. Interacts with rpy-1.</text>
</comment>
<comment type="subcellular location">
    <subcellularLocation>
        <location evidence="2">Synapse</location>
    </subcellularLocation>
    <text>Localizes to postsynaptic clusters.</text>
</comment>
<comment type="tissue specificity">
    <text evidence="2">Expressed in neurons.</text>
</comment>
<evidence type="ECO:0000255" key="1">
    <source>
        <dbReference type="PROSITE-ProRule" id="PRU00037"/>
    </source>
</evidence>
<evidence type="ECO:0000269" key="2">
    <source>
    </source>
</evidence>
<evidence type="ECO:0000269" key="3">
    <source>
    </source>
</evidence>